<reference key="1">
    <citation type="journal article" date="2009" name="Proc. Natl. Acad. Sci. U.S.A.">
        <title>Biogeography of the Sulfolobus islandicus pan-genome.</title>
        <authorList>
            <person name="Reno M.L."/>
            <person name="Held N.L."/>
            <person name="Fields C.J."/>
            <person name="Burke P.V."/>
            <person name="Whitaker R.J."/>
        </authorList>
    </citation>
    <scope>NUCLEOTIDE SEQUENCE [LARGE SCALE GENOMIC DNA]</scope>
    <source>
        <strain>M.16.4 / Kamchatka #3</strain>
    </source>
</reference>
<keyword id="KW-0479">Metal-binding</keyword>
<keyword id="KW-0687">Ribonucleoprotein</keyword>
<keyword id="KW-0689">Ribosomal protein</keyword>
<keyword id="KW-0694">RNA-binding</keyword>
<keyword id="KW-0699">rRNA-binding</keyword>
<keyword id="KW-0862">Zinc</keyword>
<keyword id="KW-0863">Zinc-finger</keyword>
<dbReference type="EMBL" id="CP001402">
    <property type="protein sequence ID" value="ACR42517.1"/>
    <property type="molecule type" value="Genomic_DNA"/>
</dbReference>
<dbReference type="RefSeq" id="WP_009990483.1">
    <property type="nucleotide sequence ID" value="NC_012726.1"/>
</dbReference>
<dbReference type="SMR" id="C4KIV3"/>
<dbReference type="KEGG" id="sid:M164_1914"/>
<dbReference type="HOGENOM" id="CLU_190191_0_0_2"/>
<dbReference type="Proteomes" id="UP000001479">
    <property type="component" value="Chromosome"/>
</dbReference>
<dbReference type="GO" id="GO:1990904">
    <property type="term" value="C:ribonucleoprotein complex"/>
    <property type="evidence" value="ECO:0007669"/>
    <property type="project" value="UniProtKB-KW"/>
</dbReference>
<dbReference type="GO" id="GO:0005840">
    <property type="term" value="C:ribosome"/>
    <property type="evidence" value="ECO:0007669"/>
    <property type="project" value="UniProtKB-KW"/>
</dbReference>
<dbReference type="GO" id="GO:0019843">
    <property type="term" value="F:rRNA binding"/>
    <property type="evidence" value="ECO:0007669"/>
    <property type="project" value="UniProtKB-UniRule"/>
</dbReference>
<dbReference type="GO" id="GO:0003735">
    <property type="term" value="F:structural constituent of ribosome"/>
    <property type="evidence" value="ECO:0007669"/>
    <property type="project" value="InterPro"/>
</dbReference>
<dbReference type="GO" id="GO:0008270">
    <property type="term" value="F:zinc ion binding"/>
    <property type="evidence" value="ECO:0007669"/>
    <property type="project" value="UniProtKB-UniRule"/>
</dbReference>
<dbReference type="GO" id="GO:0006412">
    <property type="term" value="P:translation"/>
    <property type="evidence" value="ECO:0007669"/>
    <property type="project" value="UniProtKB-UniRule"/>
</dbReference>
<dbReference type="CDD" id="cd00472">
    <property type="entry name" value="Ribosomal_L24e_L24"/>
    <property type="match status" value="1"/>
</dbReference>
<dbReference type="FunFam" id="2.30.170.20:FF:000001">
    <property type="entry name" value="probable ribosome biogenesis protein RLP24"/>
    <property type="match status" value="1"/>
</dbReference>
<dbReference type="Gene3D" id="2.30.170.20">
    <property type="entry name" value="Ribosomal protein L24e"/>
    <property type="match status" value="1"/>
</dbReference>
<dbReference type="HAMAP" id="MF_00773">
    <property type="entry name" value="Ribosomal_eL24"/>
    <property type="match status" value="1"/>
</dbReference>
<dbReference type="InterPro" id="IPR038630">
    <property type="entry name" value="L24e/L24_sf"/>
</dbReference>
<dbReference type="InterPro" id="IPR056366">
    <property type="entry name" value="Ribosomal_eL24"/>
</dbReference>
<dbReference type="InterPro" id="IPR055345">
    <property type="entry name" value="Ribosomal_eL24-rel_arc"/>
</dbReference>
<dbReference type="InterPro" id="IPR000988">
    <property type="entry name" value="Ribosomal_eL24-rel_N"/>
</dbReference>
<dbReference type="InterPro" id="IPR023442">
    <property type="entry name" value="Ribosomal_eL24_CS"/>
</dbReference>
<dbReference type="InterPro" id="IPR011017">
    <property type="entry name" value="TRASH_dom"/>
</dbReference>
<dbReference type="NCBIfam" id="NF034186">
    <property type="entry name" value="PRK14891.1-1"/>
    <property type="match status" value="1"/>
</dbReference>
<dbReference type="PANTHER" id="PTHR10792">
    <property type="entry name" value="60S RIBOSOMAL PROTEIN L24"/>
    <property type="match status" value="1"/>
</dbReference>
<dbReference type="PANTHER" id="PTHR10792:SF1">
    <property type="entry name" value="RIBOSOMAL PROTEIN L24"/>
    <property type="match status" value="1"/>
</dbReference>
<dbReference type="Pfam" id="PF01246">
    <property type="entry name" value="Ribosomal_L24e"/>
    <property type="match status" value="1"/>
</dbReference>
<dbReference type="SMART" id="SM00746">
    <property type="entry name" value="TRASH"/>
    <property type="match status" value="1"/>
</dbReference>
<dbReference type="SUPFAM" id="SSF57716">
    <property type="entry name" value="Glucocorticoid receptor-like (DNA-binding domain)"/>
    <property type="match status" value="1"/>
</dbReference>
<dbReference type="PROSITE" id="PS01073">
    <property type="entry name" value="RIBOSOMAL_L24E"/>
    <property type="match status" value="1"/>
</dbReference>
<feature type="chain" id="PRO_1000212910" description="Large ribosomal subunit protein eL24">
    <location>
        <begin position="1"/>
        <end position="61"/>
    </location>
</feature>
<feature type="zinc finger region" description="C4-type" evidence="1">
    <location>
        <begin position="7"/>
        <end position="37"/>
    </location>
</feature>
<feature type="binding site" evidence="1">
    <location>
        <position position="7"/>
    </location>
    <ligand>
        <name>Zn(2+)</name>
        <dbReference type="ChEBI" id="CHEBI:29105"/>
    </ligand>
</feature>
<feature type="binding site" evidence="1">
    <location>
        <position position="10"/>
    </location>
    <ligand>
        <name>Zn(2+)</name>
        <dbReference type="ChEBI" id="CHEBI:29105"/>
    </ligand>
</feature>
<feature type="binding site" evidence="1">
    <location>
        <position position="33"/>
    </location>
    <ligand>
        <name>Zn(2+)</name>
        <dbReference type="ChEBI" id="CHEBI:29105"/>
    </ligand>
</feature>
<feature type="binding site" evidence="1">
    <location>
        <position position="37"/>
    </location>
    <ligand>
        <name>Zn(2+)</name>
        <dbReference type="ChEBI" id="CHEBI:29105"/>
    </ligand>
</feature>
<gene>
    <name evidence="1" type="primary">rpl24e</name>
    <name type="ordered locus">M164_1914</name>
</gene>
<sequence>MPTTRQCSFCGHEIPPGTGLMYVRNDGTILWFCSSKCRKSMLKYHRDPKKYKWTTRYMKVR</sequence>
<organism>
    <name type="scientific">Saccharolobus islandicus (strain M.16.4 / Kamchatka #3)</name>
    <name type="common">Sulfolobus islandicus</name>
    <dbReference type="NCBI Taxonomy" id="426118"/>
    <lineage>
        <taxon>Archaea</taxon>
        <taxon>Thermoproteota</taxon>
        <taxon>Thermoprotei</taxon>
        <taxon>Sulfolobales</taxon>
        <taxon>Sulfolobaceae</taxon>
        <taxon>Saccharolobus</taxon>
    </lineage>
</organism>
<comment type="function">
    <text evidence="1">Binds to the 23S rRNA.</text>
</comment>
<comment type="cofactor">
    <cofactor evidence="1">
        <name>Zn(2+)</name>
        <dbReference type="ChEBI" id="CHEBI:29105"/>
    </cofactor>
    <text evidence="1">Binds 1 zinc ion per subunit.</text>
</comment>
<comment type="subunit">
    <text evidence="1">Part of the 50S ribosomal subunit. Forms a cluster with proteins L3 and L14.</text>
</comment>
<comment type="similarity">
    <text evidence="1">Belongs to the eukaryotic ribosomal protein eL24 family.</text>
</comment>
<protein>
    <recommendedName>
        <fullName evidence="1">Large ribosomal subunit protein eL24</fullName>
    </recommendedName>
    <alternativeName>
        <fullName evidence="2">50S ribosomal protein L24e</fullName>
    </alternativeName>
</protein>
<name>RL24E_SACI6</name>
<evidence type="ECO:0000255" key="1">
    <source>
        <dbReference type="HAMAP-Rule" id="MF_00773"/>
    </source>
</evidence>
<evidence type="ECO:0000305" key="2"/>
<proteinExistence type="inferred from homology"/>
<accession>C4KIV3</accession>